<feature type="chain" id="PRO_0000374930" description="Ribosomal protein uS12 methylthiotransferase RimO">
    <location>
        <begin position="1"/>
        <end position="472"/>
    </location>
</feature>
<feature type="domain" description="MTTase N-terminal" evidence="1">
    <location>
        <begin position="22"/>
        <end position="133"/>
    </location>
</feature>
<feature type="domain" description="Radical SAM core" evidence="2">
    <location>
        <begin position="157"/>
        <end position="386"/>
    </location>
</feature>
<feature type="domain" description="TRAM" evidence="1">
    <location>
        <begin position="389"/>
        <end position="460"/>
    </location>
</feature>
<feature type="binding site" evidence="1">
    <location>
        <position position="31"/>
    </location>
    <ligand>
        <name>[4Fe-4S] cluster</name>
        <dbReference type="ChEBI" id="CHEBI:49883"/>
        <label>1</label>
    </ligand>
</feature>
<feature type="binding site" evidence="1">
    <location>
        <position position="67"/>
    </location>
    <ligand>
        <name>[4Fe-4S] cluster</name>
        <dbReference type="ChEBI" id="CHEBI:49883"/>
        <label>1</label>
    </ligand>
</feature>
<feature type="binding site" evidence="1">
    <location>
        <position position="96"/>
    </location>
    <ligand>
        <name>[4Fe-4S] cluster</name>
        <dbReference type="ChEBI" id="CHEBI:49883"/>
        <label>1</label>
    </ligand>
</feature>
<feature type="binding site" evidence="1">
    <location>
        <position position="171"/>
    </location>
    <ligand>
        <name>[4Fe-4S] cluster</name>
        <dbReference type="ChEBI" id="CHEBI:49883"/>
        <label>2</label>
        <note>4Fe-4S-S-AdoMet</note>
    </ligand>
</feature>
<feature type="binding site" evidence="1">
    <location>
        <position position="175"/>
    </location>
    <ligand>
        <name>[4Fe-4S] cluster</name>
        <dbReference type="ChEBI" id="CHEBI:49883"/>
        <label>2</label>
        <note>4Fe-4S-S-AdoMet</note>
    </ligand>
</feature>
<feature type="binding site" evidence="1">
    <location>
        <position position="178"/>
    </location>
    <ligand>
        <name>[4Fe-4S] cluster</name>
        <dbReference type="ChEBI" id="CHEBI:49883"/>
        <label>2</label>
        <note>4Fe-4S-S-AdoMet</note>
    </ligand>
</feature>
<name>RIMO_PROM3</name>
<proteinExistence type="inferred from homology"/>
<dbReference type="EC" id="2.8.4.4" evidence="1"/>
<dbReference type="EMBL" id="CP000554">
    <property type="protein sequence ID" value="ABM76971.1"/>
    <property type="molecule type" value="Genomic_DNA"/>
</dbReference>
<dbReference type="RefSeq" id="WP_011824899.1">
    <property type="nucleotide sequence ID" value="NC_008820.1"/>
</dbReference>
<dbReference type="SMR" id="A2C661"/>
<dbReference type="STRING" id="59922.P9303_02161"/>
<dbReference type="KEGG" id="pmf:P9303_02161"/>
<dbReference type="HOGENOM" id="CLU_018697_0_1_3"/>
<dbReference type="BioCyc" id="PMAR59922:G1G80-208-MONOMER"/>
<dbReference type="Proteomes" id="UP000002274">
    <property type="component" value="Chromosome"/>
</dbReference>
<dbReference type="GO" id="GO:0005829">
    <property type="term" value="C:cytosol"/>
    <property type="evidence" value="ECO:0007669"/>
    <property type="project" value="TreeGrafter"/>
</dbReference>
<dbReference type="GO" id="GO:0051539">
    <property type="term" value="F:4 iron, 4 sulfur cluster binding"/>
    <property type="evidence" value="ECO:0007669"/>
    <property type="project" value="UniProtKB-UniRule"/>
</dbReference>
<dbReference type="GO" id="GO:0035599">
    <property type="term" value="F:aspartic acid methylthiotransferase activity"/>
    <property type="evidence" value="ECO:0007669"/>
    <property type="project" value="TreeGrafter"/>
</dbReference>
<dbReference type="GO" id="GO:0046872">
    <property type="term" value="F:metal ion binding"/>
    <property type="evidence" value="ECO:0007669"/>
    <property type="project" value="UniProtKB-KW"/>
</dbReference>
<dbReference type="GO" id="GO:0103039">
    <property type="term" value="F:protein methylthiotransferase activity"/>
    <property type="evidence" value="ECO:0007669"/>
    <property type="project" value="UniProtKB-EC"/>
</dbReference>
<dbReference type="GO" id="GO:0006400">
    <property type="term" value="P:tRNA modification"/>
    <property type="evidence" value="ECO:0007669"/>
    <property type="project" value="InterPro"/>
</dbReference>
<dbReference type="CDD" id="cd01335">
    <property type="entry name" value="Radical_SAM"/>
    <property type="match status" value="1"/>
</dbReference>
<dbReference type="FunFam" id="3.80.30.20:FF:000001">
    <property type="entry name" value="tRNA-2-methylthio-N(6)-dimethylallyladenosine synthase 2"/>
    <property type="match status" value="1"/>
</dbReference>
<dbReference type="Gene3D" id="3.40.50.12160">
    <property type="entry name" value="Methylthiotransferase, N-terminal domain"/>
    <property type="match status" value="1"/>
</dbReference>
<dbReference type="Gene3D" id="2.40.50.140">
    <property type="entry name" value="Nucleic acid-binding proteins"/>
    <property type="match status" value="1"/>
</dbReference>
<dbReference type="Gene3D" id="3.80.30.20">
    <property type="entry name" value="tm_1862 like domain"/>
    <property type="match status" value="1"/>
</dbReference>
<dbReference type="HAMAP" id="MF_01865">
    <property type="entry name" value="MTTase_RimO"/>
    <property type="match status" value="1"/>
</dbReference>
<dbReference type="InterPro" id="IPR006638">
    <property type="entry name" value="Elp3/MiaA/NifB-like_rSAM"/>
</dbReference>
<dbReference type="InterPro" id="IPR005839">
    <property type="entry name" value="Methylthiotransferase"/>
</dbReference>
<dbReference type="InterPro" id="IPR020612">
    <property type="entry name" value="Methylthiotransferase_CS"/>
</dbReference>
<dbReference type="InterPro" id="IPR013848">
    <property type="entry name" value="Methylthiotransferase_N"/>
</dbReference>
<dbReference type="InterPro" id="IPR038135">
    <property type="entry name" value="Methylthiotransferase_N_sf"/>
</dbReference>
<dbReference type="InterPro" id="IPR012340">
    <property type="entry name" value="NA-bd_OB-fold"/>
</dbReference>
<dbReference type="InterPro" id="IPR005840">
    <property type="entry name" value="Ribosomal_uS12_MeSTrfase_RimO"/>
</dbReference>
<dbReference type="InterPro" id="IPR007197">
    <property type="entry name" value="rSAM"/>
</dbReference>
<dbReference type="InterPro" id="IPR023404">
    <property type="entry name" value="rSAM_horseshoe"/>
</dbReference>
<dbReference type="InterPro" id="IPR002792">
    <property type="entry name" value="TRAM_dom"/>
</dbReference>
<dbReference type="NCBIfam" id="TIGR01125">
    <property type="entry name" value="30S ribosomal protein S12 methylthiotransferase RimO"/>
    <property type="match status" value="1"/>
</dbReference>
<dbReference type="NCBIfam" id="TIGR00089">
    <property type="entry name" value="MiaB/RimO family radical SAM methylthiotransferase"/>
    <property type="match status" value="1"/>
</dbReference>
<dbReference type="PANTHER" id="PTHR43837">
    <property type="entry name" value="RIBOSOMAL PROTEIN S12 METHYLTHIOTRANSFERASE RIMO"/>
    <property type="match status" value="1"/>
</dbReference>
<dbReference type="PANTHER" id="PTHR43837:SF1">
    <property type="entry name" value="RIBOSOMAL PROTEIN US12 METHYLTHIOTRANSFERASE RIMO"/>
    <property type="match status" value="1"/>
</dbReference>
<dbReference type="Pfam" id="PF04055">
    <property type="entry name" value="Radical_SAM"/>
    <property type="match status" value="1"/>
</dbReference>
<dbReference type="Pfam" id="PF18693">
    <property type="entry name" value="TRAM_2"/>
    <property type="match status" value="1"/>
</dbReference>
<dbReference type="Pfam" id="PF00919">
    <property type="entry name" value="UPF0004"/>
    <property type="match status" value="1"/>
</dbReference>
<dbReference type="SFLD" id="SFLDG01082">
    <property type="entry name" value="B12-binding_domain_containing"/>
    <property type="match status" value="1"/>
</dbReference>
<dbReference type="SFLD" id="SFLDS00029">
    <property type="entry name" value="Radical_SAM"/>
    <property type="match status" value="1"/>
</dbReference>
<dbReference type="SFLD" id="SFLDF00274">
    <property type="entry name" value="ribosomal_protein_S12_methylth"/>
    <property type="match status" value="1"/>
</dbReference>
<dbReference type="SMART" id="SM00729">
    <property type="entry name" value="Elp3"/>
    <property type="match status" value="1"/>
</dbReference>
<dbReference type="SUPFAM" id="SSF102114">
    <property type="entry name" value="Radical SAM enzymes"/>
    <property type="match status" value="1"/>
</dbReference>
<dbReference type="PROSITE" id="PS51449">
    <property type="entry name" value="MTTASE_N"/>
    <property type="match status" value="1"/>
</dbReference>
<dbReference type="PROSITE" id="PS01278">
    <property type="entry name" value="MTTASE_RADICAL"/>
    <property type="match status" value="1"/>
</dbReference>
<dbReference type="PROSITE" id="PS51918">
    <property type="entry name" value="RADICAL_SAM"/>
    <property type="match status" value="1"/>
</dbReference>
<dbReference type="PROSITE" id="PS50926">
    <property type="entry name" value="TRAM"/>
    <property type="match status" value="1"/>
</dbReference>
<reference key="1">
    <citation type="journal article" date="2007" name="PLoS Genet.">
        <title>Patterns and implications of gene gain and loss in the evolution of Prochlorococcus.</title>
        <authorList>
            <person name="Kettler G.C."/>
            <person name="Martiny A.C."/>
            <person name="Huang K."/>
            <person name="Zucker J."/>
            <person name="Coleman M.L."/>
            <person name="Rodrigue S."/>
            <person name="Chen F."/>
            <person name="Lapidus A."/>
            <person name="Ferriera S."/>
            <person name="Johnson J."/>
            <person name="Steglich C."/>
            <person name="Church G.M."/>
            <person name="Richardson P."/>
            <person name="Chisholm S.W."/>
        </authorList>
    </citation>
    <scope>NUCLEOTIDE SEQUENCE [LARGE SCALE GENOMIC DNA]</scope>
    <source>
        <strain>MIT 9303</strain>
    </source>
</reference>
<accession>A2C661</accession>
<sequence length="472" mass="52287">MTKPALRSDIPMKPTAHKQEKPSVAFAHLGCEKNRVDTEHMLGLLTEAGYSVSSDENDAAVVVVNTCSFIQDAREESVRTLIGLAEQGKELIIAGCLAQHFQEELLESIPEAKAIVGTGDYQHIVDVLKRVEAGERVNRVSAFPTFVGDETLPRQRTTDQAVAYLKVAEGCDYRCAFCIIPKLRGDQRSRPVESIVAEAHQLAEQGVQELILISQITTNYGLDLYGKPKFAELLQALGEVDIPWVRVHYAYPTGLTPEVLAAYREVPNVLRYLDLPLQHSHPDVLRAMNRPWQTDVNERLLDRIREQLPDAVLRTTLIVGFPGETEDHFNHLAAFIERQRFDHVGVFTFSPEDGTAAADLPNRVDPSIAAARKDRLMALQQPISAERNQRWVGRTIDVLIEQHNPETGAMIGRCDRFAPEVDGEVLVLPSEKGLQASPGTMVPVFITGSDVYDLTGQLVDTNAMAVTAQTSQ</sequence>
<organism>
    <name type="scientific">Prochlorococcus marinus (strain MIT 9303)</name>
    <dbReference type="NCBI Taxonomy" id="59922"/>
    <lineage>
        <taxon>Bacteria</taxon>
        <taxon>Bacillati</taxon>
        <taxon>Cyanobacteriota</taxon>
        <taxon>Cyanophyceae</taxon>
        <taxon>Synechococcales</taxon>
        <taxon>Prochlorococcaceae</taxon>
        <taxon>Prochlorococcus</taxon>
    </lineage>
</organism>
<evidence type="ECO:0000255" key="1">
    <source>
        <dbReference type="HAMAP-Rule" id="MF_01865"/>
    </source>
</evidence>
<evidence type="ECO:0000255" key="2">
    <source>
        <dbReference type="PROSITE-ProRule" id="PRU01266"/>
    </source>
</evidence>
<gene>
    <name evidence="1" type="primary">rimO</name>
    <name type="ordered locus">P9303_02161</name>
</gene>
<comment type="function">
    <text evidence="1">Catalyzes the methylthiolation of an aspartic acid residue of ribosomal protein uS12.</text>
</comment>
<comment type="catalytic activity">
    <reaction evidence="1">
        <text>L-aspartate(89)-[ribosomal protein uS12]-hydrogen + (sulfur carrier)-SH + AH2 + 2 S-adenosyl-L-methionine = 3-methylsulfanyl-L-aspartate(89)-[ribosomal protein uS12]-hydrogen + (sulfur carrier)-H + 5'-deoxyadenosine + L-methionine + A + S-adenosyl-L-homocysteine + 2 H(+)</text>
        <dbReference type="Rhea" id="RHEA:37087"/>
        <dbReference type="Rhea" id="RHEA-COMP:10460"/>
        <dbReference type="Rhea" id="RHEA-COMP:10461"/>
        <dbReference type="Rhea" id="RHEA-COMP:14737"/>
        <dbReference type="Rhea" id="RHEA-COMP:14739"/>
        <dbReference type="ChEBI" id="CHEBI:13193"/>
        <dbReference type="ChEBI" id="CHEBI:15378"/>
        <dbReference type="ChEBI" id="CHEBI:17319"/>
        <dbReference type="ChEBI" id="CHEBI:17499"/>
        <dbReference type="ChEBI" id="CHEBI:29917"/>
        <dbReference type="ChEBI" id="CHEBI:29961"/>
        <dbReference type="ChEBI" id="CHEBI:57844"/>
        <dbReference type="ChEBI" id="CHEBI:57856"/>
        <dbReference type="ChEBI" id="CHEBI:59789"/>
        <dbReference type="ChEBI" id="CHEBI:64428"/>
        <dbReference type="ChEBI" id="CHEBI:73599"/>
        <dbReference type="EC" id="2.8.4.4"/>
    </reaction>
</comment>
<comment type="cofactor">
    <cofactor evidence="1">
        <name>[4Fe-4S] cluster</name>
        <dbReference type="ChEBI" id="CHEBI:49883"/>
    </cofactor>
    <text evidence="1">Binds 2 [4Fe-4S] clusters. One cluster is coordinated with 3 cysteines and an exchangeable S-adenosyl-L-methionine.</text>
</comment>
<comment type="subcellular location">
    <subcellularLocation>
        <location evidence="1">Cytoplasm</location>
    </subcellularLocation>
</comment>
<comment type="similarity">
    <text evidence="1">Belongs to the methylthiotransferase family. RimO subfamily.</text>
</comment>
<protein>
    <recommendedName>
        <fullName evidence="1">Ribosomal protein uS12 methylthiotransferase RimO</fullName>
        <shortName evidence="1">uS12 MTTase</shortName>
        <shortName evidence="1">uS12 methylthiotransferase</shortName>
        <ecNumber evidence="1">2.8.4.4</ecNumber>
    </recommendedName>
    <alternativeName>
        <fullName evidence="1">Ribosomal protein uS12 (aspartate-C(3))-methylthiotransferase</fullName>
    </alternativeName>
    <alternativeName>
        <fullName evidence="1">Ribosome maturation factor RimO</fullName>
    </alternativeName>
</protein>
<keyword id="KW-0004">4Fe-4S</keyword>
<keyword id="KW-0963">Cytoplasm</keyword>
<keyword id="KW-0408">Iron</keyword>
<keyword id="KW-0411">Iron-sulfur</keyword>
<keyword id="KW-0479">Metal-binding</keyword>
<keyword id="KW-0949">S-adenosyl-L-methionine</keyword>
<keyword id="KW-0808">Transferase</keyword>